<proteinExistence type="inferred from homology"/>
<feature type="chain" id="PRO_1000072607" description="Deoxyribose-phosphate aldolase">
    <location>
        <begin position="1"/>
        <end position="256"/>
    </location>
</feature>
<feature type="active site" description="Proton donor/acceptor" evidence="1">
    <location>
        <position position="102"/>
    </location>
</feature>
<feature type="active site" description="Schiff-base intermediate with acetaldehyde" evidence="1">
    <location>
        <position position="165"/>
    </location>
</feature>
<feature type="active site" description="Proton donor/acceptor" evidence="1">
    <location>
        <position position="197"/>
    </location>
</feature>
<evidence type="ECO:0000255" key="1">
    <source>
        <dbReference type="HAMAP-Rule" id="MF_00592"/>
    </source>
</evidence>
<comment type="function">
    <text evidence="1">Catalyzes a reversible aldol reaction between acetaldehyde and D-glyceraldehyde 3-phosphate to generate 2-deoxy-D-ribose 5-phosphate.</text>
</comment>
<comment type="catalytic activity">
    <reaction evidence="1">
        <text>2-deoxy-D-ribose 5-phosphate = D-glyceraldehyde 3-phosphate + acetaldehyde</text>
        <dbReference type="Rhea" id="RHEA:12821"/>
        <dbReference type="ChEBI" id="CHEBI:15343"/>
        <dbReference type="ChEBI" id="CHEBI:59776"/>
        <dbReference type="ChEBI" id="CHEBI:62877"/>
        <dbReference type="EC" id="4.1.2.4"/>
    </reaction>
</comment>
<comment type="pathway">
    <text evidence="1">Carbohydrate degradation; 2-deoxy-D-ribose 1-phosphate degradation; D-glyceraldehyde 3-phosphate and acetaldehyde from 2-deoxy-alpha-D-ribose 1-phosphate: step 2/2.</text>
</comment>
<comment type="subcellular location">
    <subcellularLocation>
        <location evidence="1">Cytoplasm</location>
    </subcellularLocation>
</comment>
<comment type="similarity">
    <text evidence="1">Belongs to the DeoC/FbaB aldolase family. DeoC type 2 subfamily.</text>
</comment>
<gene>
    <name evidence="1" type="primary">deoC</name>
    <name type="ordered locus">Sputcn32_2822</name>
</gene>
<accession>A4Y9A8</accession>
<protein>
    <recommendedName>
        <fullName evidence="1">Deoxyribose-phosphate aldolase</fullName>
        <shortName evidence="1">DERA</shortName>
        <ecNumber evidence="1">4.1.2.4</ecNumber>
    </recommendedName>
    <alternativeName>
        <fullName evidence="1">2-deoxy-D-ribose 5-phosphate aldolase</fullName>
    </alternativeName>
    <alternativeName>
        <fullName evidence="1">Phosphodeoxyriboaldolase</fullName>
        <shortName evidence="1">Deoxyriboaldolase</shortName>
    </alternativeName>
</protein>
<reference key="1">
    <citation type="submission" date="2007-04" db="EMBL/GenBank/DDBJ databases">
        <title>Complete sequence of Shewanella putrefaciens CN-32.</title>
        <authorList>
            <consortium name="US DOE Joint Genome Institute"/>
            <person name="Copeland A."/>
            <person name="Lucas S."/>
            <person name="Lapidus A."/>
            <person name="Barry K."/>
            <person name="Detter J.C."/>
            <person name="Glavina del Rio T."/>
            <person name="Hammon N."/>
            <person name="Israni S."/>
            <person name="Dalin E."/>
            <person name="Tice H."/>
            <person name="Pitluck S."/>
            <person name="Chain P."/>
            <person name="Malfatti S."/>
            <person name="Shin M."/>
            <person name="Vergez L."/>
            <person name="Schmutz J."/>
            <person name="Larimer F."/>
            <person name="Land M."/>
            <person name="Hauser L."/>
            <person name="Kyrpides N."/>
            <person name="Mikhailova N."/>
            <person name="Romine M.F."/>
            <person name="Fredrickson J."/>
            <person name="Tiedje J."/>
            <person name="Richardson P."/>
        </authorList>
    </citation>
    <scope>NUCLEOTIDE SEQUENCE [LARGE SCALE GENOMIC DNA]</scope>
    <source>
        <strain>CN-32 / ATCC BAA-453</strain>
    </source>
</reference>
<name>DEOC_SHEPC</name>
<keyword id="KW-0963">Cytoplasm</keyword>
<keyword id="KW-0456">Lyase</keyword>
<keyword id="KW-0704">Schiff base</keyword>
<sequence length="256" mass="27357">MTDLKKAAQRAIELMDLTTLNDDDTDQKVIDLCHKAKTPAGNTAAICIYPRFIPIARKTLDEIGAEDIQIATVTNFPHGNDDIAIAVLETRAAVAYGADEVDVVFPYRALMEGNETVGFELVKACKEACGEVLLKVIIESGVLADPALIRRASELSIDAGADFIKTSTGKVPVNATLEAAEIMLTVISEKNTQVGFKPAGGVRDAAQAAEFLGVAERILGADWVSPRTFRFGASSLLNSLLHTLELADAPKPTQGY</sequence>
<dbReference type="EC" id="4.1.2.4" evidence="1"/>
<dbReference type="EMBL" id="CP000681">
    <property type="protein sequence ID" value="ABP76541.1"/>
    <property type="molecule type" value="Genomic_DNA"/>
</dbReference>
<dbReference type="SMR" id="A4Y9A8"/>
<dbReference type="STRING" id="319224.Sputcn32_2822"/>
<dbReference type="KEGG" id="spc:Sputcn32_2822"/>
<dbReference type="eggNOG" id="COG0274">
    <property type="taxonomic scope" value="Bacteria"/>
</dbReference>
<dbReference type="HOGENOM" id="CLU_053595_3_1_6"/>
<dbReference type="UniPathway" id="UPA00002">
    <property type="reaction ID" value="UER00468"/>
</dbReference>
<dbReference type="GO" id="GO:0005737">
    <property type="term" value="C:cytoplasm"/>
    <property type="evidence" value="ECO:0007669"/>
    <property type="project" value="UniProtKB-SubCell"/>
</dbReference>
<dbReference type="GO" id="GO:0004139">
    <property type="term" value="F:deoxyribose-phosphate aldolase activity"/>
    <property type="evidence" value="ECO:0007669"/>
    <property type="project" value="UniProtKB-UniRule"/>
</dbReference>
<dbReference type="GO" id="GO:0006018">
    <property type="term" value="P:2-deoxyribose 1-phosphate catabolic process"/>
    <property type="evidence" value="ECO:0007669"/>
    <property type="project" value="UniProtKB-UniRule"/>
</dbReference>
<dbReference type="GO" id="GO:0016052">
    <property type="term" value="P:carbohydrate catabolic process"/>
    <property type="evidence" value="ECO:0007669"/>
    <property type="project" value="TreeGrafter"/>
</dbReference>
<dbReference type="GO" id="GO:0009264">
    <property type="term" value="P:deoxyribonucleotide catabolic process"/>
    <property type="evidence" value="ECO:0007669"/>
    <property type="project" value="InterPro"/>
</dbReference>
<dbReference type="CDD" id="cd00959">
    <property type="entry name" value="DeoC"/>
    <property type="match status" value="1"/>
</dbReference>
<dbReference type="FunFam" id="3.20.20.70:FF:000034">
    <property type="entry name" value="Deoxyribose-phosphate aldolase"/>
    <property type="match status" value="1"/>
</dbReference>
<dbReference type="Gene3D" id="3.20.20.70">
    <property type="entry name" value="Aldolase class I"/>
    <property type="match status" value="1"/>
</dbReference>
<dbReference type="HAMAP" id="MF_00592">
    <property type="entry name" value="DeoC_type2"/>
    <property type="match status" value="1"/>
</dbReference>
<dbReference type="InterPro" id="IPR013785">
    <property type="entry name" value="Aldolase_TIM"/>
</dbReference>
<dbReference type="InterPro" id="IPR011343">
    <property type="entry name" value="DeoC"/>
</dbReference>
<dbReference type="InterPro" id="IPR002915">
    <property type="entry name" value="DeoC/FbaB/LacD_aldolase"/>
</dbReference>
<dbReference type="InterPro" id="IPR023649">
    <property type="entry name" value="DeoC_typeII"/>
</dbReference>
<dbReference type="NCBIfam" id="TIGR00126">
    <property type="entry name" value="deoC"/>
    <property type="match status" value="1"/>
</dbReference>
<dbReference type="PANTHER" id="PTHR10889">
    <property type="entry name" value="DEOXYRIBOSE-PHOSPHATE ALDOLASE"/>
    <property type="match status" value="1"/>
</dbReference>
<dbReference type="PANTHER" id="PTHR10889:SF3">
    <property type="entry name" value="DEOXYRIBOSE-PHOSPHATE ALDOLASE"/>
    <property type="match status" value="1"/>
</dbReference>
<dbReference type="Pfam" id="PF01791">
    <property type="entry name" value="DeoC"/>
    <property type="match status" value="1"/>
</dbReference>
<dbReference type="PIRSF" id="PIRSF001357">
    <property type="entry name" value="DeoC"/>
    <property type="match status" value="1"/>
</dbReference>
<dbReference type="SMART" id="SM01133">
    <property type="entry name" value="DeoC"/>
    <property type="match status" value="1"/>
</dbReference>
<dbReference type="SUPFAM" id="SSF51569">
    <property type="entry name" value="Aldolase"/>
    <property type="match status" value="1"/>
</dbReference>
<organism>
    <name type="scientific">Shewanella putrefaciens (strain CN-32 / ATCC BAA-453)</name>
    <dbReference type="NCBI Taxonomy" id="319224"/>
    <lineage>
        <taxon>Bacteria</taxon>
        <taxon>Pseudomonadati</taxon>
        <taxon>Pseudomonadota</taxon>
        <taxon>Gammaproteobacteria</taxon>
        <taxon>Alteromonadales</taxon>
        <taxon>Shewanellaceae</taxon>
        <taxon>Shewanella</taxon>
    </lineage>
</organism>